<feature type="chain" id="PRO_0000150286" description="Putative cysteine desulfurase NifS">
    <location>
        <begin position="1"/>
        <end position="395"/>
    </location>
</feature>
<feature type="active site" description="Cysteine persulfide intermediate" evidence="2">
    <location>
        <position position="325"/>
    </location>
</feature>
<feature type="binding site" evidence="3">
    <location>
        <begin position="69"/>
        <end position="70"/>
    </location>
    <ligand>
        <name>pyridoxal 5'-phosphate</name>
        <dbReference type="ChEBI" id="CHEBI:597326"/>
    </ligand>
</feature>
<feature type="binding site" evidence="3">
    <location>
        <position position="177"/>
    </location>
    <ligand>
        <name>pyridoxal 5'-phosphate</name>
        <dbReference type="ChEBI" id="CHEBI:597326"/>
    </ligand>
</feature>
<feature type="binding site" evidence="3">
    <location>
        <begin position="197"/>
        <end position="199"/>
    </location>
    <ligand>
        <name>pyridoxal 5'-phosphate</name>
        <dbReference type="ChEBI" id="CHEBI:597326"/>
    </ligand>
</feature>
<feature type="binding site" evidence="3">
    <location>
        <position position="235"/>
    </location>
    <ligand>
        <name>pyridoxal 5'-phosphate</name>
        <dbReference type="ChEBI" id="CHEBI:597326"/>
    </ligand>
</feature>
<feature type="binding site" description="via persulfide group" evidence="1">
    <location>
        <position position="325"/>
    </location>
    <ligand>
        <name>[2Fe-2S] cluster</name>
        <dbReference type="ChEBI" id="CHEBI:190135"/>
    </ligand>
</feature>
<feature type="modified residue" description="N6-(pyridoxal phosphate)lysine" evidence="3">
    <location>
        <position position="200"/>
    </location>
</feature>
<name>NIFS_BACSU</name>
<proteinExistence type="evidence at transcript level"/>
<gene>
    <name type="primary">nifS</name>
    <name type="synonym">iscS</name>
    <name type="ordered locus">BSU27880</name>
</gene>
<comment type="function">
    <text evidence="2 4">Catalyzes the removal of elemental sulfur from cysteine to produce alanine (By similarity). Seems to be required for NAD biosynthesis (PubMed:8444804).</text>
</comment>
<comment type="catalytic activity">
    <reaction evidence="2">
        <text>(sulfur carrier)-H + L-cysteine = (sulfur carrier)-SH + L-alanine</text>
        <dbReference type="Rhea" id="RHEA:43892"/>
        <dbReference type="Rhea" id="RHEA-COMP:14737"/>
        <dbReference type="Rhea" id="RHEA-COMP:14739"/>
        <dbReference type="ChEBI" id="CHEBI:29917"/>
        <dbReference type="ChEBI" id="CHEBI:35235"/>
        <dbReference type="ChEBI" id="CHEBI:57972"/>
        <dbReference type="ChEBI" id="CHEBI:64428"/>
        <dbReference type="EC" id="2.8.1.7"/>
    </reaction>
</comment>
<comment type="cofactor">
    <cofactor evidence="2">
        <name>pyridoxal 5'-phosphate</name>
        <dbReference type="ChEBI" id="CHEBI:597326"/>
    </cofactor>
</comment>
<comment type="induction">
    <text evidence="4">Repressed in the presence of nicotinic acid.</text>
</comment>
<comment type="disruption phenotype">
    <text evidence="4">Cells lacking this gene require nicotinic acid for growth.</text>
</comment>
<comment type="similarity">
    <text evidence="5">Belongs to the class-V pyridoxal-phosphate-dependent aminotransferase family. NifS/IscS subfamily.</text>
</comment>
<sequence>MIYLDYAATTPICEEALTVYQKLSMDMYGNASSLHDAGGKAKHILEYCREKIANIIGGEASGIYFTSGGTESNFLAIQSLLNGLPKTKRHFITTAMEHQSIHNCAAFLEQQGYDVTVIEPNEYGLITEEILLTHIRPETGLVSIQHANSETGIIQPIQHLSSYLHNKGILLHCDAVQTFGKIPINTKNLGVDALSMSSHKIHGPKGVGAVYIRPDVPWKPVYPLTTHEYGFRAGTVNVPGIGAFTAAAELIVSEMEKQISRNEALRTYFLDQIRIRSLPVTLAADTSKAECLPHIIGCFFHSFEGQYVMLECNRSNICISTGSACSAGYHGPSETMKALRKTEQEALQFIRISFGRHTTAEQLEQLLHTFTVLWEQKKGEFDIDRRIKANGRQQA</sequence>
<organism>
    <name type="scientific">Bacillus subtilis (strain 168)</name>
    <dbReference type="NCBI Taxonomy" id="224308"/>
    <lineage>
        <taxon>Bacteria</taxon>
        <taxon>Bacillati</taxon>
        <taxon>Bacillota</taxon>
        <taxon>Bacilli</taxon>
        <taxon>Bacillales</taxon>
        <taxon>Bacillaceae</taxon>
        <taxon>Bacillus</taxon>
    </lineage>
</organism>
<accession>P38033</accession>
<evidence type="ECO:0000250" key="1">
    <source>
        <dbReference type="UniProtKB" id="O29689"/>
    </source>
</evidence>
<evidence type="ECO:0000250" key="2">
    <source>
        <dbReference type="UniProtKB" id="P05341"/>
    </source>
</evidence>
<evidence type="ECO:0000250" key="3">
    <source>
        <dbReference type="UniProtKB" id="P0A6B9"/>
    </source>
</evidence>
<evidence type="ECO:0000269" key="4">
    <source>
    </source>
</evidence>
<evidence type="ECO:0000305" key="5"/>
<keyword id="KW-0408">Iron</keyword>
<keyword id="KW-0411">Iron-sulfur</keyword>
<keyword id="KW-0479">Metal-binding</keyword>
<keyword id="KW-0663">Pyridoxal phosphate</keyword>
<keyword id="KW-1185">Reference proteome</keyword>
<keyword id="KW-0808">Transferase</keyword>
<reference key="1">
    <citation type="journal article" date="1993" name="J. Bacteriol.">
        <title>Cloning, nucleotide sequence, and regulation of the Bacillus subtilis nadB gene and a nifS-like gene, both of which are essential for NAD biosynthesis.</title>
        <authorList>
            <person name="Sun D."/>
            <person name="Setlow P.L."/>
        </authorList>
    </citation>
    <scope>NUCLEOTIDE SEQUENCE [GENOMIC DNA]</scope>
    <scope>FUNCTION</scope>
    <scope>INDUCTION</scope>
    <scope>DISRUPTION PHENOTYPE</scope>
    <source>
        <strain>168</strain>
    </source>
</reference>
<reference key="2">
    <citation type="journal article" date="1997" name="Nature">
        <title>The complete genome sequence of the Gram-positive bacterium Bacillus subtilis.</title>
        <authorList>
            <person name="Kunst F."/>
            <person name="Ogasawara N."/>
            <person name="Moszer I."/>
            <person name="Albertini A.M."/>
            <person name="Alloni G."/>
            <person name="Azevedo V."/>
            <person name="Bertero M.G."/>
            <person name="Bessieres P."/>
            <person name="Bolotin A."/>
            <person name="Borchert S."/>
            <person name="Borriss R."/>
            <person name="Boursier L."/>
            <person name="Brans A."/>
            <person name="Braun M."/>
            <person name="Brignell S.C."/>
            <person name="Bron S."/>
            <person name="Brouillet S."/>
            <person name="Bruschi C.V."/>
            <person name="Caldwell B."/>
            <person name="Capuano V."/>
            <person name="Carter N.M."/>
            <person name="Choi S.-K."/>
            <person name="Codani J.-J."/>
            <person name="Connerton I.F."/>
            <person name="Cummings N.J."/>
            <person name="Daniel R.A."/>
            <person name="Denizot F."/>
            <person name="Devine K.M."/>
            <person name="Duesterhoeft A."/>
            <person name="Ehrlich S.D."/>
            <person name="Emmerson P.T."/>
            <person name="Entian K.-D."/>
            <person name="Errington J."/>
            <person name="Fabret C."/>
            <person name="Ferrari E."/>
            <person name="Foulger D."/>
            <person name="Fritz C."/>
            <person name="Fujita M."/>
            <person name="Fujita Y."/>
            <person name="Fuma S."/>
            <person name="Galizzi A."/>
            <person name="Galleron N."/>
            <person name="Ghim S.-Y."/>
            <person name="Glaser P."/>
            <person name="Goffeau A."/>
            <person name="Golightly E.J."/>
            <person name="Grandi G."/>
            <person name="Guiseppi G."/>
            <person name="Guy B.J."/>
            <person name="Haga K."/>
            <person name="Haiech J."/>
            <person name="Harwood C.R."/>
            <person name="Henaut A."/>
            <person name="Hilbert H."/>
            <person name="Holsappel S."/>
            <person name="Hosono S."/>
            <person name="Hullo M.-F."/>
            <person name="Itaya M."/>
            <person name="Jones L.-M."/>
            <person name="Joris B."/>
            <person name="Karamata D."/>
            <person name="Kasahara Y."/>
            <person name="Klaerr-Blanchard M."/>
            <person name="Klein C."/>
            <person name="Kobayashi Y."/>
            <person name="Koetter P."/>
            <person name="Koningstein G."/>
            <person name="Krogh S."/>
            <person name="Kumano M."/>
            <person name="Kurita K."/>
            <person name="Lapidus A."/>
            <person name="Lardinois S."/>
            <person name="Lauber J."/>
            <person name="Lazarevic V."/>
            <person name="Lee S.-M."/>
            <person name="Levine A."/>
            <person name="Liu H."/>
            <person name="Masuda S."/>
            <person name="Mauel C."/>
            <person name="Medigue C."/>
            <person name="Medina N."/>
            <person name="Mellado R.P."/>
            <person name="Mizuno M."/>
            <person name="Moestl D."/>
            <person name="Nakai S."/>
            <person name="Noback M."/>
            <person name="Noone D."/>
            <person name="O'Reilly M."/>
            <person name="Ogawa K."/>
            <person name="Ogiwara A."/>
            <person name="Oudega B."/>
            <person name="Park S.-H."/>
            <person name="Parro V."/>
            <person name="Pohl T.M."/>
            <person name="Portetelle D."/>
            <person name="Porwollik S."/>
            <person name="Prescott A.M."/>
            <person name="Presecan E."/>
            <person name="Pujic P."/>
            <person name="Purnelle B."/>
            <person name="Rapoport G."/>
            <person name="Rey M."/>
            <person name="Reynolds S."/>
            <person name="Rieger M."/>
            <person name="Rivolta C."/>
            <person name="Rocha E."/>
            <person name="Roche B."/>
            <person name="Rose M."/>
            <person name="Sadaie Y."/>
            <person name="Sato T."/>
            <person name="Scanlan E."/>
            <person name="Schleich S."/>
            <person name="Schroeter R."/>
            <person name="Scoffone F."/>
            <person name="Sekiguchi J."/>
            <person name="Sekowska A."/>
            <person name="Seror S.J."/>
            <person name="Serror P."/>
            <person name="Shin B.-S."/>
            <person name="Soldo B."/>
            <person name="Sorokin A."/>
            <person name="Tacconi E."/>
            <person name="Takagi T."/>
            <person name="Takahashi H."/>
            <person name="Takemaru K."/>
            <person name="Takeuchi M."/>
            <person name="Tamakoshi A."/>
            <person name="Tanaka T."/>
            <person name="Terpstra P."/>
            <person name="Tognoni A."/>
            <person name="Tosato V."/>
            <person name="Uchiyama S."/>
            <person name="Vandenbol M."/>
            <person name="Vannier F."/>
            <person name="Vassarotti A."/>
            <person name="Viari A."/>
            <person name="Wambutt R."/>
            <person name="Wedler E."/>
            <person name="Wedler H."/>
            <person name="Weitzenegger T."/>
            <person name="Winters P."/>
            <person name="Wipat A."/>
            <person name="Yamamoto H."/>
            <person name="Yamane K."/>
            <person name="Yasumoto K."/>
            <person name="Yata K."/>
            <person name="Yoshida K."/>
            <person name="Yoshikawa H.-F."/>
            <person name="Zumstein E."/>
            <person name="Yoshikawa H."/>
            <person name="Danchin A."/>
        </authorList>
    </citation>
    <scope>NUCLEOTIDE SEQUENCE [LARGE SCALE GENOMIC DNA]</scope>
    <source>
        <strain>168</strain>
    </source>
</reference>
<protein>
    <recommendedName>
        <fullName evidence="5">Putative cysteine desulfurase NifS</fullName>
        <ecNumber evidence="2">2.8.1.7</ecNumber>
    </recommendedName>
</protein>
<dbReference type="EC" id="2.8.1.7" evidence="2"/>
<dbReference type="EMBL" id="M98822">
    <property type="protein sequence ID" value="AAA21613.1"/>
    <property type="molecule type" value="Genomic_DNA"/>
</dbReference>
<dbReference type="EMBL" id="AL009126">
    <property type="protein sequence ID" value="CAB14748.1"/>
    <property type="molecule type" value="Genomic_DNA"/>
</dbReference>
<dbReference type="PIR" id="B47071">
    <property type="entry name" value="B47071"/>
</dbReference>
<dbReference type="RefSeq" id="NP_390666.1">
    <property type="nucleotide sequence ID" value="NC_000964.3"/>
</dbReference>
<dbReference type="RefSeq" id="WP_004398844.1">
    <property type="nucleotide sequence ID" value="NZ_OZ025638.1"/>
</dbReference>
<dbReference type="SMR" id="P38033"/>
<dbReference type="FunCoup" id="P38033">
    <property type="interactions" value="160"/>
</dbReference>
<dbReference type="STRING" id="224308.BSU27880"/>
<dbReference type="PaxDb" id="224308-BSU27880"/>
<dbReference type="EnsemblBacteria" id="CAB14748">
    <property type="protein sequence ID" value="CAB14748"/>
    <property type="gene ID" value="BSU_27880"/>
</dbReference>
<dbReference type="GeneID" id="936637"/>
<dbReference type="KEGG" id="bsu:BSU27880"/>
<dbReference type="PATRIC" id="fig|224308.179.peg.3029"/>
<dbReference type="eggNOG" id="COG1104">
    <property type="taxonomic scope" value="Bacteria"/>
</dbReference>
<dbReference type="InParanoid" id="P38033"/>
<dbReference type="OrthoDB" id="9808002at2"/>
<dbReference type="PhylomeDB" id="P38033"/>
<dbReference type="BioCyc" id="BSUB:BSU27880-MONOMER"/>
<dbReference type="Proteomes" id="UP000001570">
    <property type="component" value="Chromosome"/>
</dbReference>
<dbReference type="GO" id="GO:0031071">
    <property type="term" value="F:cysteine desulfurase activity"/>
    <property type="evidence" value="ECO:0007669"/>
    <property type="project" value="UniProtKB-EC"/>
</dbReference>
<dbReference type="GO" id="GO:0051536">
    <property type="term" value="F:iron-sulfur cluster binding"/>
    <property type="evidence" value="ECO:0007669"/>
    <property type="project" value="UniProtKB-KW"/>
</dbReference>
<dbReference type="GO" id="GO:0046872">
    <property type="term" value="F:metal ion binding"/>
    <property type="evidence" value="ECO:0007669"/>
    <property type="project" value="UniProtKB-KW"/>
</dbReference>
<dbReference type="Gene3D" id="1.10.260.50">
    <property type="match status" value="1"/>
</dbReference>
<dbReference type="Gene3D" id="3.90.1150.10">
    <property type="entry name" value="Aspartate Aminotransferase, domain 1"/>
    <property type="match status" value="1"/>
</dbReference>
<dbReference type="Gene3D" id="3.40.640.10">
    <property type="entry name" value="Type I PLP-dependent aspartate aminotransferase-like (Major domain)"/>
    <property type="match status" value="1"/>
</dbReference>
<dbReference type="InterPro" id="IPR000192">
    <property type="entry name" value="Aminotrans_V_dom"/>
</dbReference>
<dbReference type="InterPro" id="IPR020578">
    <property type="entry name" value="Aminotrans_V_PyrdxlP_BS"/>
</dbReference>
<dbReference type="InterPro" id="IPR016454">
    <property type="entry name" value="Cysteine_dSase"/>
</dbReference>
<dbReference type="InterPro" id="IPR015424">
    <property type="entry name" value="PyrdxlP-dep_Trfase"/>
</dbReference>
<dbReference type="InterPro" id="IPR015421">
    <property type="entry name" value="PyrdxlP-dep_Trfase_major"/>
</dbReference>
<dbReference type="InterPro" id="IPR015422">
    <property type="entry name" value="PyrdxlP-dep_Trfase_small"/>
</dbReference>
<dbReference type="NCBIfam" id="NF002806">
    <property type="entry name" value="PRK02948.1"/>
    <property type="match status" value="1"/>
</dbReference>
<dbReference type="PANTHER" id="PTHR11601:SF36">
    <property type="entry name" value="CYSTEINE DESULFURASE NIFS-RELATED"/>
    <property type="match status" value="1"/>
</dbReference>
<dbReference type="PANTHER" id="PTHR11601">
    <property type="entry name" value="CYSTEINE DESULFURYLASE FAMILY MEMBER"/>
    <property type="match status" value="1"/>
</dbReference>
<dbReference type="Pfam" id="PF00266">
    <property type="entry name" value="Aminotran_5"/>
    <property type="match status" value="1"/>
</dbReference>
<dbReference type="PIRSF" id="PIRSF005572">
    <property type="entry name" value="NifS"/>
    <property type="match status" value="1"/>
</dbReference>
<dbReference type="SUPFAM" id="SSF53383">
    <property type="entry name" value="PLP-dependent transferases"/>
    <property type="match status" value="1"/>
</dbReference>
<dbReference type="PROSITE" id="PS00595">
    <property type="entry name" value="AA_TRANSFER_CLASS_5"/>
    <property type="match status" value="1"/>
</dbReference>